<keyword id="KW-0028">Amino-acid biosynthesis</keyword>
<keyword id="KW-0963">Cytoplasm</keyword>
<keyword id="KW-0220">Diaminopimelate biosynthesis</keyword>
<keyword id="KW-0457">Lysine biosynthesis</keyword>
<keyword id="KW-0520">NAD</keyword>
<keyword id="KW-0521">NADP</keyword>
<keyword id="KW-0560">Oxidoreductase</keyword>
<dbReference type="EC" id="1.17.1.8" evidence="1"/>
<dbReference type="EMBL" id="CT573326">
    <property type="protein sequence ID" value="CAK13697.1"/>
    <property type="molecule type" value="Genomic_DNA"/>
</dbReference>
<dbReference type="RefSeq" id="WP_011532128.1">
    <property type="nucleotide sequence ID" value="NC_008027.1"/>
</dbReference>
<dbReference type="SMR" id="Q1IF57"/>
<dbReference type="STRING" id="384676.PSEEN0780"/>
<dbReference type="GeneID" id="32804087"/>
<dbReference type="KEGG" id="pen:PSEEN0780"/>
<dbReference type="eggNOG" id="COG0289">
    <property type="taxonomic scope" value="Bacteria"/>
</dbReference>
<dbReference type="HOGENOM" id="CLU_047479_2_1_6"/>
<dbReference type="OrthoDB" id="9790352at2"/>
<dbReference type="UniPathway" id="UPA00034">
    <property type="reaction ID" value="UER00018"/>
</dbReference>
<dbReference type="Proteomes" id="UP000000658">
    <property type="component" value="Chromosome"/>
</dbReference>
<dbReference type="GO" id="GO:0005829">
    <property type="term" value="C:cytosol"/>
    <property type="evidence" value="ECO:0007669"/>
    <property type="project" value="TreeGrafter"/>
</dbReference>
<dbReference type="GO" id="GO:0008839">
    <property type="term" value="F:4-hydroxy-tetrahydrodipicolinate reductase"/>
    <property type="evidence" value="ECO:0007669"/>
    <property type="project" value="UniProtKB-EC"/>
</dbReference>
<dbReference type="GO" id="GO:0051287">
    <property type="term" value="F:NAD binding"/>
    <property type="evidence" value="ECO:0007669"/>
    <property type="project" value="UniProtKB-UniRule"/>
</dbReference>
<dbReference type="GO" id="GO:0050661">
    <property type="term" value="F:NADP binding"/>
    <property type="evidence" value="ECO:0007669"/>
    <property type="project" value="UniProtKB-UniRule"/>
</dbReference>
<dbReference type="GO" id="GO:0016726">
    <property type="term" value="F:oxidoreductase activity, acting on CH or CH2 groups, NAD or NADP as acceptor"/>
    <property type="evidence" value="ECO:0007669"/>
    <property type="project" value="UniProtKB-UniRule"/>
</dbReference>
<dbReference type="GO" id="GO:0019877">
    <property type="term" value="P:diaminopimelate biosynthetic process"/>
    <property type="evidence" value="ECO:0007669"/>
    <property type="project" value="UniProtKB-UniRule"/>
</dbReference>
<dbReference type="GO" id="GO:0009089">
    <property type="term" value="P:lysine biosynthetic process via diaminopimelate"/>
    <property type="evidence" value="ECO:0007669"/>
    <property type="project" value="UniProtKB-UniRule"/>
</dbReference>
<dbReference type="CDD" id="cd02274">
    <property type="entry name" value="DHDPR_N"/>
    <property type="match status" value="1"/>
</dbReference>
<dbReference type="FunFam" id="3.30.360.10:FF:000004">
    <property type="entry name" value="4-hydroxy-tetrahydrodipicolinate reductase"/>
    <property type="match status" value="1"/>
</dbReference>
<dbReference type="FunFam" id="3.40.50.720:FF:000048">
    <property type="entry name" value="4-hydroxy-tetrahydrodipicolinate reductase"/>
    <property type="match status" value="1"/>
</dbReference>
<dbReference type="Gene3D" id="3.30.360.10">
    <property type="entry name" value="Dihydrodipicolinate Reductase, domain 2"/>
    <property type="match status" value="1"/>
</dbReference>
<dbReference type="Gene3D" id="3.40.50.720">
    <property type="entry name" value="NAD(P)-binding Rossmann-like Domain"/>
    <property type="match status" value="1"/>
</dbReference>
<dbReference type="HAMAP" id="MF_00102">
    <property type="entry name" value="DapB"/>
    <property type="match status" value="1"/>
</dbReference>
<dbReference type="InterPro" id="IPR022663">
    <property type="entry name" value="DapB_C"/>
</dbReference>
<dbReference type="InterPro" id="IPR000846">
    <property type="entry name" value="DapB_N"/>
</dbReference>
<dbReference type="InterPro" id="IPR022664">
    <property type="entry name" value="DapB_N_CS"/>
</dbReference>
<dbReference type="InterPro" id="IPR023940">
    <property type="entry name" value="DHDPR_bac"/>
</dbReference>
<dbReference type="InterPro" id="IPR036291">
    <property type="entry name" value="NAD(P)-bd_dom_sf"/>
</dbReference>
<dbReference type="NCBIfam" id="TIGR00036">
    <property type="entry name" value="dapB"/>
    <property type="match status" value="1"/>
</dbReference>
<dbReference type="PANTHER" id="PTHR20836:SF0">
    <property type="entry name" value="4-HYDROXY-TETRAHYDRODIPICOLINATE REDUCTASE 1, CHLOROPLASTIC-RELATED"/>
    <property type="match status" value="1"/>
</dbReference>
<dbReference type="PANTHER" id="PTHR20836">
    <property type="entry name" value="DIHYDRODIPICOLINATE REDUCTASE"/>
    <property type="match status" value="1"/>
</dbReference>
<dbReference type="Pfam" id="PF05173">
    <property type="entry name" value="DapB_C"/>
    <property type="match status" value="1"/>
</dbReference>
<dbReference type="Pfam" id="PF01113">
    <property type="entry name" value="DapB_N"/>
    <property type="match status" value="1"/>
</dbReference>
<dbReference type="PIRSF" id="PIRSF000161">
    <property type="entry name" value="DHPR"/>
    <property type="match status" value="1"/>
</dbReference>
<dbReference type="SUPFAM" id="SSF55347">
    <property type="entry name" value="Glyceraldehyde-3-phosphate dehydrogenase-like, C-terminal domain"/>
    <property type="match status" value="1"/>
</dbReference>
<dbReference type="SUPFAM" id="SSF51735">
    <property type="entry name" value="NAD(P)-binding Rossmann-fold domains"/>
    <property type="match status" value="1"/>
</dbReference>
<dbReference type="PROSITE" id="PS01298">
    <property type="entry name" value="DAPB"/>
    <property type="match status" value="1"/>
</dbReference>
<feature type="chain" id="PRO_1000008612" description="4-hydroxy-tetrahydrodipicolinate reductase">
    <location>
        <begin position="1"/>
        <end position="267"/>
    </location>
</feature>
<feature type="active site" description="Proton donor/acceptor" evidence="1">
    <location>
        <position position="155"/>
    </location>
</feature>
<feature type="active site" description="Proton donor" evidence="1">
    <location>
        <position position="159"/>
    </location>
</feature>
<feature type="binding site" evidence="1">
    <location>
        <begin position="8"/>
        <end position="13"/>
    </location>
    <ligand>
        <name>NAD(+)</name>
        <dbReference type="ChEBI" id="CHEBI:57540"/>
    </ligand>
</feature>
<feature type="binding site" evidence="1">
    <location>
        <position position="34"/>
    </location>
    <ligand>
        <name>NAD(+)</name>
        <dbReference type="ChEBI" id="CHEBI:57540"/>
    </ligand>
</feature>
<feature type="binding site" evidence="1">
    <location>
        <position position="35"/>
    </location>
    <ligand>
        <name>NADP(+)</name>
        <dbReference type="ChEBI" id="CHEBI:58349"/>
    </ligand>
</feature>
<feature type="binding site" evidence="1">
    <location>
        <begin position="98"/>
        <end position="100"/>
    </location>
    <ligand>
        <name>NAD(+)</name>
        <dbReference type="ChEBI" id="CHEBI:57540"/>
    </ligand>
</feature>
<feature type="binding site" evidence="1">
    <location>
        <begin position="122"/>
        <end position="125"/>
    </location>
    <ligand>
        <name>NAD(+)</name>
        <dbReference type="ChEBI" id="CHEBI:57540"/>
    </ligand>
</feature>
<feature type="binding site" evidence="1">
    <location>
        <position position="156"/>
    </location>
    <ligand>
        <name>(S)-2,3,4,5-tetrahydrodipicolinate</name>
        <dbReference type="ChEBI" id="CHEBI:16845"/>
    </ligand>
</feature>
<feature type="binding site" evidence="1">
    <location>
        <begin position="165"/>
        <end position="166"/>
    </location>
    <ligand>
        <name>(S)-2,3,4,5-tetrahydrodipicolinate</name>
        <dbReference type="ChEBI" id="CHEBI:16845"/>
    </ligand>
</feature>
<sequence>MRRIAVMGAAGRMGKTLIEAVQQTPGAGLTAAIDRPDSSLVGADAGELAALGRIGVLLCDDLAKVVDEFDVLIDFTHPSVTLKNLAFCRKAGKAMIIGTTGFSVEEKQLLAEAGKEIPIVFAANFSVGVNLSLKLLDMAARVLGDDVDIEIIEAHHRHKVDAPSGTALRMGEVVANALGRDLQEVAVYGREGQTGARDRKTIGFATVRAGDVVGDHTVLFAAEGERLEITHKASSRMTFAKGAVRAALWLDGREPGLYDMQDVLELR</sequence>
<comment type="function">
    <text evidence="1">Catalyzes the conversion of 4-hydroxy-tetrahydrodipicolinate (HTPA) to tetrahydrodipicolinate.</text>
</comment>
<comment type="catalytic activity">
    <reaction evidence="1">
        <text>(S)-2,3,4,5-tetrahydrodipicolinate + NAD(+) + H2O = (2S,4S)-4-hydroxy-2,3,4,5-tetrahydrodipicolinate + NADH + H(+)</text>
        <dbReference type="Rhea" id="RHEA:35323"/>
        <dbReference type="ChEBI" id="CHEBI:15377"/>
        <dbReference type="ChEBI" id="CHEBI:15378"/>
        <dbReference type="ChEBI" id="CHEBI:16845"/>
        <dbReference type="ChEBI" id="CHEBI:57540"/>
        <dbReference type="ChEBI" id="CHEBI:57945"/>
        <dbReference type="ChEBI" id="CHEBI:67139"/>
        <dbReference type="EC" id="1.17.1.8"/>
    </reaction>
</comment>
<comment type="catalytic activity">
    <reaction evidence="1">
        <text>(S)-2,3,4,5-tetrahydrodipicolinate + NADP(+) + H2O = (2S,4S)-4-hydroxy-2,3,4,5-tetrahydrodipicolinate + NADPH + H(+)</text>
        <dbReference type="Rhea" id="RHEA:35331"/>
        <dbReference type="ChEBI" id="CHEBI:15377"/>
        <dbReference type="ChEBI" id="CHEBI:15378"/>
        <dbReference type="ChEBI" id="CHEBI:16845"/>
        <dbReference type="ChEBI" id="CHEBI:57783"/>
        <dbReference type="ChEBI" id="CHEBI:58349"/>
        <dbReference type="ChEBI" id="CHEBI:67139"/>
        <dbReference type="EC" id="1.17.1.8"/>
    </reaction>
</comment>
<comment type="pathway">
    <text evidence="1">Amino-acid biosynthesis; L-lysine biosynthesis via DAP pathway; (S)-tetrahydrodipicolinate from L-aspartate: step 4/4.</text>
</comment>
<comment type="subcellular location">
    <subcellularLocation>
        <location evidence="1">Cytoplasm</location>
    </subcellularLocation>
</comment>
<comment type="similarity">
    <text evidence="1">Belongs to the DapB family.</text>
</comment>
<comment type="caution">
    <text evidence="2">Was originally thought to be a dihydrodipicolinate reductase (DHDPR), catalyzing the conversion of dihydrodipicolinate to tetrahydrodipicolinate. However, it was shown in E.coli that the substrate of the enzymatic reaction is not dihydrodipicolinate (DHDP) but in fact (2S,4S)-4-hydroxy-2,3,4,5-tetrahydrodipicolinic acid (HTPA), the product released by the DapA-catalyzed reaction.</text>
</comment>
<accession>Q1IF57</accession>
<organism>
    <name type="scientific">Pseudomonas entomophila (strain L48)</name>
    <dbReference type="NCBI Taxonomy" id="384676"/>
    <lineage>
        <taxon>Bacteria</taxon>
        <taxon>Pseudomonadati</taxon>
        <taxon>Pseudomonadota</taxon>
        <taxon>Gammaproteobacteria</taxon>
        <taxon>Pseudomonadales</taxon>
        <taxon>Pseudomonadaceae</taxon>
        <taxon>Pseudomonas</taxon>
    </lineage>
</organism>
<gene>
    <name evidence="1" type="primary">dapB</name>
    <name type="ordered locus">PSEEN0780</name>
</gene>
<protein>
    <recommendedName>
        <fullName evidence="1">4-hydroxy-tetrahydrodipicolinate reductase</fullName>
        <shortName evidence="1">HTPA reductase</shortName>
        <ecNumber evidence="1">1.17.1.8</ecNumber>
    </recommendedName>
</protein>
<evidence type="ECO:0000255" key="1">
    <source>
        <dbReference type="HAMAP-Rule" id="MF_00102"/>
    </source>
</evidence>
<evidence type="ECO:0000305" key="2"/>
<reference key="1">
    <citation type="journal article" date="2006" name="Nat. Biotechnol.">
        <title>Complete genome sequence of the entomopathogenic and metabolically versatile soil bacterium Pseudomonas entomophila.</title>
        <authorList>
            <person name="Vodovar N."/>
            <person name="Vallenet D."/>
            <person name="Cruveiller S."/>
            <person name="Rouy Z."/>
            <person name="Barbe V."/>
            <person name="Acosta C."/>
            <person name="Cattolico L."/>
            <person name="Jubin C."/>
            <person name="Lajus A."/>
            <person name="Segurens B."/>
            <person name="Vacherie B."/>
            <person name="Wincker P."/>
            <person name="Weissenbach J."/>
            <person name="Lemaitre B."/>
            <person name="Medigue C."/>
            <person name="Boccard F."/>
        </authorList>
    </citation>
    <scope>NUCLEOTIDE SEQUENCE [LARGE SCALE GENOMIC DNA]</scope>
    <source>
        <strain>L48</strain>
    </source>
</reference>
<name>DAPB_PSEE4</name>
<proteinExistence type="inferred from homology"/>